<reference key="1">
    <citation type="journal article" date="2008" name="Appl. Environ. Microbiol.">
        <title>The genome of Polaromonas sp. strain JS666: insights into the evolution of a hydrocarbon- and xenobiotic-degrading bacterium, and features of relevance to biotechnology.</title>
        <authorList>
            <person name="Mattes T.E."/>
            <person name="Alexander A.K."/>
            <person name="Richardson P.M."/>
            <person name="Munk A.C."/>
            <person name="Han C.S."/>
            <person name="Stothard P."/>
            <person name="Coleman N.V."/>
        </authorList>
    </citation>
    <scope>NUCLEOTIDE SEQUENCE [LARGE SCALE GENOMIC DNA]</scope>
    <source>
        <strain>JS666 / ATCC BAA-500</strain>
    </source>
</reference>
<proteinExistence type="inferred from homology"/>
<feature type="chain" id="PRO_0000302683" description="ATP synthase subunit alpha">
    <location>
        <begin position="1"/>
        <end position="517"/>
    </location>
</feature>
<feature type="binding site" evidence="1">
    <location>
        <begin position="174"/>
        <end position="181"/>
    </location>
    <ligand>
        <name>ATP</name>
        <dbReference type="ChEBI" id="CHEBI:30616"/>
    </ligand>
</feature>
<feature type="site" description="Required for activity" evidence="1">
    <location>
        <position position="378"/>
    </location>
</feature>
<gene>
    <name evidence="1" type="primary">atpA</name>
    <name type="ordered locus">Bpro_0325</name>
</gene>
<accession>Q12GQ2</accession>
<protein>
    <recommendedName>
        <fullName evidence="1">ATP synthase subunit alpha</fullName>
        <ecNumber evidence="1">7.1.2.2</ecNumber>
    </recommendedName>
    <alternativeName>
        <fullName evidence="1">ATP synthase F1 sector subunit alpha</fullName>
    </alternativeName>
    <alternativeName>
        <fullName evidence="1">F-ATPase subunit alpha</fullName>
    </alternativeName>
</protein>
<name>ATPA_POLSJ</name>
<evidence type="ECO:0000255" key="1">
    <source>
        <dbReference type="HAMAP-Rule" id="MF_01346"/>
    </source>
</evidence>
<comment type="function">
    <text evidence="1">Produces ATP from ADP in the presence of a proton gradient across the membrane. The alpha chain is a regulatory subunit.</text>
</comment>
<comment type="catalytic activity">
    <reaction evidence="1">
        <text>ATP + H2O + 4 H(+)(in) = ADP + phosphate + 5 H(+)(out)</text>
        <dbReference type="Rhea" id="RHEA:57720"/>
        <dbReference type="ChEBI" id="CHEBI:15377"/>
        <dbReference type="ChEBI" id="CHEBI:15378"/>
        <dbReference type="ChEBI" id="CHEBI:30616"/>
        <dbReference type="ChEBI" id="CHEBI:43474"/>
        <dbReference type="ChEBI" id="CHEBI:456216"/>
        <dbReference type="EC" id="7.1.2.2"/>
    </reaction>
</comment>
<comment type="subunit">
    <text evidence="1">F-type ATPases have 2 components, CF(1) - the catalytic core - and CF(0) - the membrane proton channel. CF(1) has five subunits: alpha(3), beta(3), gamma(1), delta(1), epsilon(1). CF(0) has three main subunits: a(1), b(2) and c(9-12). The alpha and beta chains form an alternating ring which encloses part of the gamma chain. CF(1) is attached to CF(0) by a central stalk formed by the gamma and epsilon chains, while a peripheral stalk is formed by the delta and b chains.</text>
</comment>
<comment type="subcellular location">
    <subcellularLocation>
        <location evidence="1">Cell inner membrane</location>
        <topology evidence="1">Peripheral membrane protein</topology>
    </subcellularLocation>
</comment>
<comment type="similarity">
    <text evidence="1">Belongs to the ATPase alpha/beta chains family.</text>
</comment>
<organism>
    <name type="scientific">Polaromonas sp. (strain JS666 / ATCC BAA-500)</name>
    <dbReference type="NCBI Taxonomy" id="296591"/>
    <lineage>
        <taxon>Bacteria</taxon>
        <taxon>Pseudomonadati</taxon>
        <taxon>Pseudomonadota</taxon>
        <taxon>Betaproteobacteria</taxon>
        <taxon>Burkholderiales</taxon>
        <taxon>Comamonadaceae</taxon>
        <taxon>Polaromonas</taxon>
    </lineage>
</organism>
<dbReference type="EC" id="7.1.2.2" evidence="1"/>
<dbReference type="EMBL" id="CP000316">
    <property type="protein sequence ID" value="ABE42290.1"/>
    <property type="molecule type" value="Genomic_DNA"/>
</dbReference>
<dbReference type="RefSeq" id="WP_011481297.1">
    <property type="nucleotide sequence ID" value="NC_007948.1"/>
</dbReference>
<dbReference type="SMR" id="Q12GQ2"/>
<dbReference type="STRING" id="296591.Bpro_0325"/>
<dbReference type="KEGG" id="pol:Bpro_0325"/>
<dbReference type="eggNOG" id="COG0056">
    <property type="taxonomic scope" value="Bacteria"/>
</dbReference>
<dbReference type="HOGENOM" id="CLU_010091_2_1_4"/>
<dbReference type="OrthoDB" id="9803053at2"/>
<dbReference type="Proteomes" id="UP000001983">
    <property type="component" value="Chromosome"/>
</dbReference>
<dbReference type="GO" id="GO:0005886">
    <property type="term" value="C:plasma membrane"/>
    <property type="evidence" value="ECO:0007669"/>
    <property type="project" value="UniProtKB-SubCell"/>
</dbReference>
<dbReference type="GO" id="GO:0045259">
    <property type="term" value="C:proton-transporting ATP synthase complex"/>
    <property type="evidence" value="ECO:0007669"/>
    <property type="project" value="UniProtKB-KW"/>
</dbReference>
<dbReference type="GO" id="GO:0043531">
    <property type="term" value="F:ADP binding"/>
    <property type="evidence" value="ECO:0007669"/>
    <property type="project" value="TreeGrafter"/>
</dbReference>
<dbReference type="GO" id="GO:0005524">
    <property type="term" value="F:ATP binding"/>
    <property type="evidence" value="ECO:0007669"/>
    <property type="project" value="UniProtKB-UniRule"/>
</dbReference>
<dbReference type="GO" id="GO:0046933">
    <property type="term" value="F:proton-transporting ATP synthase activity, rotational mechanism"/>
    <property type="evidence" value="ECO:0007669"/>
    <property type="project" value="UniProtKB-UniRule"/>
</dbReference>
<dbReference type="CDD" id="cd18113">
    <property type="entry name" value="ATP-synt_F1_alpha_C"/>
    <property type="match status" value="1"/>
</dbReference>
<dbReference type="CDD" id="cd18116">
    <property type="entry name" value="ATP-synt_F1_alpha_N"/>
    <property type="match status" value="1"/>
</dbReference>
<dbReference type="CDD" id="cd01132">
    <property type="entry name" value="F1-ATPase_alpha_CD"/>
    <property type="match status" value="1"/>
</dbReference>
<dbReference type="FunFam" id="1.20.150.20:FF:000001">
    <property type="entry name" value="ATP synthase subunit alpha"/>
    <property type="match status" value="1"/>
</dbReference>
<dbReference type="FunFam" id="2.40.30.20:FF:000001">
    <property type="entry name" value="ATP synthase subunit alpha"/>
    <property type="match status" value="1"/>
</dbReference>
<dbReference type="FunFam" id="3.40.50.300:FF:000002">
    <property type="entry name" value="ATP synthase subunit alpha"/>
    <property type="match status" value="1"/>
</dbReference>
<dbReference type="Gene3D" id="2.40.30.20">
    <property type="match status" value="1"/>
</dbReference>
<dbReference type="Gene3D" id="1.20.150.20">
    <property type="entry name" value="ATP synthase alpha/beta chain, C-terminal domain"/>
    <property type="match status" value="1"/>
</dbReference>
<dbReference type="Gene3D" id="3.40.50.300">
    <property type="entry name" value="P-loop containing nucleotide triphosphate hydrolases"/>
    <property type="match status" value="1"/>
</dbReference>
<dbReference type="HAMAP" id="MF_01346">
    <property type="entry name" value="ATP_synth_alpha_bact"/>
    <property type="match status" value="1"/>
</dbReference>
<dbReference type="InterPro" id="IPR023366">
    <property type="entry name" value="ATP_synth_asu-like_sf"/>
</dbReference>
<dbReference type="InterPro" id="IPR000793">
    <property type="entry name" value="ATP_synth_asu_C"/>
</dbReference>
<dbReference type="InterPro" id="IPR038376">
    <property type="entry name" value="ATP_synth_asu_C_sf"/>
</dbReference>
<dbReference type="InterPro" id="IPR033732">
    <property type="entry name" value="ATP_synth_F1_a_nt-bd_dom"/>
</dbReference>
<dbReference type="InterPro" id="IPR005294">
    <property type="entry name" value="ATP_synth_F1_asu"/>
</dbReference>
<dbReference type="InterPro" id="IPR020003">
    <property type="entry name" value="ATPase_a/bsu_AS"/>
</dbReference>
<dbReference type="InterPro" id="IPR004100">
    <property type="entry name" value="ATPase_F1/V1/A1_a/bsu_N"/>
</dbReference>
<dbReference type="InterPro" id="IPR036121">
    <property type="entry name" value="ATPase_F1/V1/A1_a/bsu_N_sf"/>
</dbReference>
<dbReference type="InterPro" id="IPR000194">
    <property type="entry name" value="ATPase_F1/V1/A1_a/bsu_nucl-bd"/>
</dbReference>
<dbReference type="InterPro" id="IPR027417">
    <property type="entry name" value="P-loop_NTPase"/>
</dbReference>
<dbReference type="NCBIfam" id="TIGR00962">
    <property type="entry name" value="atpA"/>
    <property type="match status" value="1"/>
</dbReference>
<dbReference type="NCBIfam" id="NF009884">
    <property type="entry name" value="PRK13343.1"/>
    <property type="match status" value="1"/>
</dbReference>
<dbReference type="PANTHER" id="PTHR48082">
    <property type="entry name" value="ATP SYNTHASE SUBUNIT ALPHA, MITOCHONDRIAL"/>
    <property type="match status" value="1"/>
</dbReference>
<dbReference type="PANTHER" id="PTHR48082:SF2">
    <property type="entry name" value="ATP SYNTHASE SUBUNIT ALPHA, MITOCHONDRIAL"/>
    <property type="match status" value="1"/>
</dbReference>
<dbReference type="Pfam" id="PF00006">
    <property type="entry name" value="ATP-synt_ab"/>
    <property type="match status" value="1"/>
</dbReference>
<dbReference type="Pfam" id="PF00306">
    <property type="entry name" value="ATP-synt_ab_C"/>
    <property type="match status" value="1"/>
</dbReference>
<dbReference type="Pfam" id="PF02874">
    <property type="entry name" value="ATP-synt_ab_N"/>
    <property type="match status" value="1"/>
</dbReference>
<dbReference type="PIRSF" id="PIRSF039088">
    <property type="entry name" value="F_ATPase_subunit_alpha"/>
    <property type="match status" value="1"/>
</dbReference>
<dbReference type="SUPFAM" id="SSF47917">
    <property type="entry name" value="C-terminal domain of alpha and beta subunits of F1 ATP synthase"/>
    <property type="match status" value="1"/>
</dbReference>
<dbReference type="SUPFAM" id="SSF50615">
    <property type="entry name" value="N-terminal domain of alpha and beta subunits of F1 ATP synthase"/>
    <property type="match status" value="1"/>
</dbReference>
<dbReference type="SUPFAM" id="SSF52540">
    <property type="entry name" value="P-loop containing nucleoside triphosphate hydrolases"/>
    <property type="match status" value="1"/>
</dbReference>
<dbReference type="PROSITE" id="PS00152">
    <property type="entry name" value="ATPASE_ALPHA_BETA"/>
    <property type="match status" value="1"/>
</dbReference>
<keyword id="KW-0066">ATP synthesis</keyword>
<keyword id="KW-0067">ATP-binding</keyword>
<keyword id="KW-0997">Cell inner membrane</keyword>
<keyword id="KW-1003">Cell membrane</keyword>
<keyword id="KW-0139">CF(1)</keyword>
<keyword id="KW-0375">Hydrogen ion transport</keyword>
<keyword id="KW-0406">Ion transport</keyword>
<keyword id="KW-0472">Membrane</keyword>
<keyword id="KW-0547">Nucleotide-binding</keyword>
<keyword id="KW-1185">Reference proteome</keyword>
<keyword id="KW-1278">Translocase</keyword>
<keyword id="KW-0813">Transport</keyword>
<sequence>MQLNPAEISELIKSRIEGLTVSADIRNQGTVVSVTDGIVRIHGLSDVMQGEMLEFPATADGTPTYGLALNLERDSVGSVILGEYEHIAEGDTVKCTGRILEVPVGPELLGRVVNALGQPIDGKGPINAKMTDVIEKVAPGVIARKSVDQPLQTGLKSIDSMVPVGRGQRELIIGDRQTGKTAVAIDAIINQKGKGVSCVYVAIGQKASSIKNVVRSLEQAGAMEYTIVVAASASESAAMQYVSAYSGCTMGEYFRDRGEDALIVYDDLSKQAVAYRQVSLLLRRPPGREAYPGDVFYLHSRLLERAARVNEKYVEDFTKGAVKGKTGSLTALPIIETQAGDVSAFVPTNVISITDGQIFLETSLFNAGIRPAINAGISVSRVGGAAQTKLIKNLSGGIRTDLAQYRELAAFAQFASDLDEATRKQLDRGARVTELLKQAQYSPLSISNMAATLFAVNKGFMDDVEVKKVLAFEHGLHAWLKDKNAALMAKLEANKAMDKDAEAELNTAVAAFKKAFA</sequence>